<organism>
    <name type="scientific">Agrostis stolonifera</name>
    <name type="common">Creeping bentgrass</name>
    <dbReference type="NCBI Taxonomy" id="63632"/>
    <lineage>
        <taxon>Eukaryota</taxon>
        <taxon>Viridiplantae</taxon>
        <taxon>Streptophyta</taxon>
        <taxon>Embryophyta</taxon>
        <taxon>Tracheophyta</taxon>
        <taxon>Spermatophyta</taxon>
        <taxon>Magnoliopsida</taxon>
        <taxon>Liliopsida</taxon>
        <taxon>Poales</taxon>
        <taxon>Poaceae</taxon>
        <taxon>BOP clade</taxon>
        <taxon>Pooideae</taxon>
        <taxon>Poodae</taxon>
        <taxon>Poeae</taxon>
        <taxon>Poeae Chloroplast Group 1 (Aveneae type)</taxon>
        <taxon>Agrostidodinae</taxon>
        <taxon>Agrostidinae</taxon>
        <taxon>Agrostis</taxon>
    </lineage>
</organism>
<keyword id="KW-0150">Chloroplast</keyword>
<keyword id="KW-0934">Plastid</keyword>
<keyword id="KW-0687">Ribonucleoprotein</keyword>
<keyword id="KW-0689">Ribosomal protein</keyword>
<keyword id="KW-0694">RNA-binding</keyword>
<keyword id="KW-0699">rRNA-binding</keyword>
<protein>
    <recommendedName>
        <fullName evidence="2">Large ribosomal subunit protein uL23cy</fullName>
    </recommendedName>
    <alternativeName>
        <fullName>50S ribosomal protein L23-B, chloroplastic</fullName>
    </alternativeName>
</protein>
<gene>
    <name type="primary">rpl23-B</name>
</gene>
<dbReference type="EMBL" id="EF115543">
    <property type="protein sequence ID" value="ABK79622.1"/>
    <property type="molecule type" value="Genomic_DNA"/>
</dbReference>
<dbReference type="EMBL" id="EF115543">
    <property type="protein sequence ID" value="ABK79642.1"/>
    <property type="molecule type" value="Genomic_DNA"/>
</dbReference>
<dbReference type="SMR" id="A1EA51"/>
<dbReference type="GO" id="GO:0009507">
    <property type="term" value="C:chloroplast"/>
    <property type="evidence" value="ECO:0007669"/>
    <property type="project" value="UniProtKB-SubCell"/>
</dbReference>
<dbReference type="GO" id="GO:1990904">
    <property type="term" value="C:ribonucleoprotein complex"/>
    <property type="evidence" value="ECO:0007669"/>
    <property type="project" value="UniProtKB-KW"/>
</dbReference>
<dbReference type="GO" id="GO:0005840">
    <property type="term" value="C:ribosome"/>
    <property type="evidence" value="ECO:0007669"/>
    <property type="project" value="UniProtKB-KW"/>
</dbReference>
<dbReference type="GO" id="GO:0019843">
    <property type="term" value="F:rRNA binding"/>
    <property type="evidence" value="ECO:0007669"/>
    <property type="project" value="UniProtKB-UniRule"/>
</dbReference>
<dbReference type="GO" id="GO:0003735">
    <property type="term" value="F:structural constituent of ribosome"/>
    <property type="evidence" value="ECO:0007669"/>
    <property type="project" value="InterPro"/>
</dbReference>
<dbReference type="GO" id="GO:0006412">
    <property type="term" value="P:translation"/>
    <property type="evidence" value="ECO:0007669"/>
    <property type="project" value="UniProtKB-UniRule"/>
</dbReference>
<dbReference type="FunFam" id="3.30.70.330:FF:000002">
    <property type="entry name" value="50S ribosomal protein L23, chloroplastic"/>
    <property type="match status" value="1"/>
</dbReference>
<dbReference type="Gene3D" id="3.30.70.330">
    <property type="match status" value="1"/>
</dbReference>
<dbReference type="HAMAP" id="MF_01369_B">
    <property type="entry name" value="Ribosomal_uL23_B"/>
    <property type="match status" value="1"/>
</dbReference>
<dbReference type="InterPro" id="IPR012677">
    <property type="entry name" value="Nucleotide-bd_a/b_plait_sf"/>
</dbReference>
<dbReference type="InterPro" id="IPR013025">
    <property type="entry name" value="Ribosomal_uL23-like"/>
</dbReference>
<dbReference type="InterPro" id="IPR012678">
    <property type="entry name" value="Ribosomal_uL23/eL15/eS24_sf"/>
</dbReference>
<dbReference type="InterPro" id="IPR001014">
    <property type="entry name" value="Ribosomal_uL23_CS"/>
</dbReference>
<dbReference type="PANTHER" id="PTHR11620">
    <property type="entry name" value="60S RIBOSOMAL PROTEIN L23A"/>
    <property type="match status" value="1"/>
</dbReference>
<dbReference type="Pfam" id="PF00276">
    <property type="entry name" value="Ribosomal_L23"/>
    <property type="match status" value="1"/>
</dbReference>
<dbReference type="SUPFAM" id="SSF54189">
    <property type="entry name" value="Ribosomal proteins S24e, L23 and L15e"/>
    <property type="match status" value="1"/>
</dbReference>
<dbReference type="PROSITE" id="PS00050">
    <property type="entry name" value="RIBOSOMAL_L23"/>
    <property type="match status" value="1"/>
</dbReference>
<comment type="function">
    <text evidence="1">Binds to 23S rRNA.</text>
</comment>
<comment type="subunit">
    <text evidence="1">Part of the 50S ribosomal subunit.</text>
</comment>
<comment type="subcellular location">
    <subcellularLocation>
        <location>Plastid</location>
        <location>Chloroplast</location>
    </subcellularLocation>
</comment>
<comment type="similarity">
    <text evidence="2">Belongs to the universal ribosomal protein uL23 family.</text>
</comment>
<reference key="1">
    <citation type="journal article" date="2007" name="Theor. Appl. Genet.">
        <title>Complete chloroplast genome sequences of Hordeum vulgare, Sorghum bicolor and Agrostis stolonifera, and comparative analyses with other grass genomes.</title>
        <authorList>
            <person name="Saski C."/>
            <person name="Lee S.-B."/>
            <person name="Fjellheim S."/>
            <person name="Guda C."/>
            <person name="Jansen R.K."/>
            <person name="Luo H."/>
            <person name="Tomkins J."/>
            <person name="Rognli O.A."/>
            <person name="Daniell H."/>
            <person name="Clarke J.L."/>
        </authorList>
    </citation>
    <scope>NUCLEOTIDE SEQUENCE [LARGE SCALE GENOMIC DNA]</scope>
    <source>
        <strain>cv. Penn A-4</strain>
    </source>
</reference>
<evidence type="ECO:0000250" key="1"/>
<evidence type="ECO:0000305" key="2"/>
<geneLocation type="chloroplast"/>
<sequence>MDGIKYAVFTEKSLRLLGKNQYTFNVESGFTKTEIKHWVELFFGVKVVAVNSHRLPGKGRRIGPILGHTMHYRRMIITLQPGYSIPLLDREKN</sequence>
<name>RK23B_AGRST</name>
<feature type="chain" id="PRO_0000277153" description="Large ribosomal subunit protein uL23cy">
    <location>
        <begin position="1"/>
        <end position="93"/>
    </location>
</feature>
<proteinExistence type="inferred from homology"/>
<accession>A1EA51</accession>